<organism>
    <name type="scientific">Crocosphaera subtropica (strain ATCC 51142 / BH68)</name>
    <name type="common">Cyanothece sp. (strain ATCC 51142)</name>
    <dbReference type="NCBI Taxonomy" id="43989"/>
    <lineage>
        <taxon>Bacteria</taxon>
        <taxon>Bacillati</taxon>
        <taxon>Cyanobacteriota</taxon>
        <taxon>Cyanophyceae</taxon>
        <taxon>Oscillatoriophycideae</taxon>
        <taxon>Chroococcales</taxon>
        <taxon>Aphanothecaceae</taxon>
        <taxon>Crocosphaera</taxon>
        <taxon>Crocosphaera subtropica</taxon>
    </lineage>
</organism>
<accession>B1WZT9</accession>
<feature type="chain" id="PRO_1000194238" description="Small ribosomal subunit protein bS20">
    <location>
        <begin position="1"/>
        <end position="97"/>
    </location>
</feature>
<feature type="region of interest" description="Disordered" evidence="2">
    <location>
        <begin position="1"/>
        <end position="22"/>
    </location>
</feature>
<name>RS20_CROS5</name>
<comment type="function">
    <text evidence="1">Binds directly to 16S ribosomal RNA.</text>
</comment>
<comment type="similarity">
    <text evidence="1">Belongs to the bacterial ribosomal protein bS20 family.</text>
</comment>
<reference key="1">
    <citation type="journal article" date="2008" name="Proc. Natl. Acad. Sci. U.S.A.">
        <title>The genome of Cyanothece 51142, a unicellular diazotrophic cyanobacterium important in the marine nitrogen cycle.</title>
        <authorList>
            <person name="Welsh E.A."/>
            <person name="Liberton M."/>
            <person name="Stoeckel J."/>
            <person name="Loh T."/>
            <person name="Elvitigala T."/>
            <person name="Wang C."/>
            <person name="Wollam A."/>
            <person name="Fulton R.S."/>
            <person name="Clifton S.W."/>
            <person name="Jacobs J.M."/>
            <person name="Aurora R."/>
            <person name="Ghosh B.K."/>
            <person name="Sherman L.A."/>
            <person name="Smith R.D."/>
            <person name="Wilson R.K."/>
            <person name="Pakrasi H.B."/>
        </authorList>
    </citation>
    <scope>NUCLEOTIDE SEQUENCE [LARGE SCALE GENOMIC DNA]</scope>
    <source>
        <strain>ATCC 51142 / BH68</strain>
    </source>
</reference>
<evidence type="ECO:0000255" key="1">
    <source>
        <dbReference type="HAMAP-Rule" id="MF_00500"/>
    </source>
</evidence>
<evidence type="ECO:0000256" key="2">
    <source>
        <dbReference type="SAM" id="MobiDB-lite"/>
    </source>
</evidence>
<evidence type="ECO:0000305" key="3"/>
<proteinExistence type="inferred from homology"/>
<gene>
    <name evidence="1" type="primary">rpsT</name>
    <name evidence="1" type="synonym">rps20</name>
    <name type="ordered locus">cce_3490</name>
</gene>
<protein>
    <recommendedName>
        <fullName evidence="1">Small ribosomal subunit protein bS20</fullName>
    </recommendedName>
    <alternativeName>
        <fullName evidence="3">30S ribosomal protein S20</fullName>
    </alternativeName>
</protein>
<keyword id="KW-1185">Reference proteome</keyword>
<keyword id="KW-0687">Ribonucleoprotein</keyword>
<keyword id="KW-0689">Ribosomal protein</keyword>
<keyword id="KW-0694">RNA-binding</keyword>
<keyword id="KW-0699">rRNA-binding</keyword>
<dbReference type="EMBL" id="CP000806">
    <property type="protein sequence ID" value="ACB52838.1"/>
    <property type="molecule type" value="Genomic_DNA"/>
</dbReference>
<dbReference type="RefSeq" id="WP_012362171.1">
    <property type="nucleotide sequence ID" value="NC_010546.1"/>
</dbReference>
<dbReference type="SMR" id="B1WZT9"/>
<dbReference type="STRING" id="43989.cce_3490"/>
<dbReference type="KEGG" id="cyt:cce_3490"/>
<dbReference type="eggNOG" id="COG0268">
    <property type="taxonomic scope" value="Bacteria"/>
</dbReference>
<dbReference type="HOGENOM" id="CLU_160655_5_0_3"/>
<dbReference type="OrthoDB" id="9808392at2"/>
<dbReference type="Proteomes" id="UP000001203">
    <property type="component" value="Chromosome circular"/>
</dbReference>
<dbReference type="GO" id="GO:0005829">
    <property type="term" value="C:cytosol"/>
    <property type="evidence" value="ECO:0007669"/>
    <property type="project" value="TreeGrafter"/>
</dbReference>
<dbReference type="GO" id="GO:0015935">
    <property type="term" value="C:small ribosomal subunit"/>
    <property type="evidence" value="ECO:0007669"/>
    <property type="project" value="TreeGrafter"/>
</dbReference>
<dbReference type="GO" id="GO:0070181">
    <property type="term" value="F:small ribosomal subunit rRNA binding"/>
    <property type="evidence" value="ECO:0007669"/>
    <property type="project" value="TreeGrafter"/>
</dbReference>
<dbReference type="GO" id="GO:0003735">
    <property type="term" value="F:structural constituent of ribosome"/>
    <property type="evidence" value="ECO:0007669"/>
    <property type="project" value="InterPro"/>
</dbReference>
<dbReference type="GO" id="GO:0006412">
    <property type="term" value="P:translation"/>
    <property type="evidence" value="ECO:0007669"/>
    <property type="project" value="UniProtKB-UniRule"/>
</dbReference>
<dbReference type="FunFam" id="1.20.58.110:FF:000001">
    <property type="entry name" value="30S ribosomal protein S20"/>
    <property type="match status" value="1"/>
</dbReference>
<dbReference type="Gene3D" id="1.20.58.110">
    <property type="entry name" value="Ribosomal protein S20"/>
    <property type="match status" value="1"/>
</dbReference>
<dbReference type="HAMAP" id="MF_00500">
    <property type="entry name" value="Ribosomal_bS20"/>
    <property type="match status" value="1"/>
</dbReference>
<dbReference type="InterPro" id="IPR002583">
    <property type="entry name" value="Ribosomal_bS20"/>
</dbReference>
<dbReference type="InterPro" id="IPR036510">
    <property type="entry name" value="Ribosomal_bS20_sf"/>
</dbReference>
<dbReference type="NCBIfam" id="TIGR00029">
    <property type="entry name" value="S20"/>
    <property type="match status" value="1"/>
</dbReference>
<dbReference type="PANTHER" id="PTHR33398">
    <property type="entry name" value="30S RIBOSOMAL PROTEIN S20"/>
    <property type="match status" value="1"/>
</dbReference>
<dbReference type="PANTHER" id="PTHR33398:SF1">
    <property type="entry name" value="SMALL RIBOSOMAL SUBUNIT PROTEIN BS20C"/>
    <property type="match status" value="1"/>
</dbReference>
<dbReference type="Pfam" id="PF01649">
    <property type="entry name" value="Ribosomal_S20p"/>
    <property type="match status" value="1"/>
</dbReference>
<dbReference type="SUPFAM" id="SSF46992">
    <property type="entry name" value="Ribosomal protein S20"/>
    <property type="match status" value="1"/>
</dbReference>
<sequence>MANSKSALKRIRTSERNRLRNKSYKSAVRTLMKKYLQAVEEYAASPTPENKAVVDQRMSAAYSKIDKAVKRSVLHRNNGARKKARLAKALQQVASAS</sequence>